<sequence length="334" mass="39291">MPSASKNFRLQSKYVFLTYPKCSSQRDDLFQFLWEKLTPFLIFFLGVASELHQDGTTHYHALIQLDKKPCIRDPSFFDFEGNHPNIQPARNSKQVLDYISKDGDIKTRGDFRDHKVSPRKSDARWRTIIQTATSKEEYLDMIKEEFPHEWATKLQWLEYSANKLFPPQPEQYVSPFTESDLRCHEDLHNWRETHLYHDEGRTGVRHPSLYICGPTRTGKTTWARSLGRHNYWNGTIDFTNYDEHATYNIIDDIPFKFVPLWKQLIGCQSDFTVNPKYGKKKKIKGGIPSIILCNPDEDWMLSMTSQQKDYFEDNCVTHYMCDGETFFARESSSH</sequence>
<dbReference type="EC" id="2.7.7.-"/>
<dbReference type="EC" id="3.1.21.-"/>
<dbReference type="EMBL" id="Y11023">
    <property type="protein sequence ID" value="CAA71908.2"/>
    <property type="molecule type" value="Genomic_DNA"/>
</dbReference>
<dbReference type="EMBL" id="DQ458791">
    <property type="protein sequence ID" value="ABE67102.1"/>
    <property type="molecule type" value="Genomic_DNA"/>
</dbReference>
<dbReference type="RefSeq" id="NP_612221.2">
    <molecule id="O39522-1"/>
    <property type="nucleotide sequence ID" value="NC_003493.2"/>
</dbReference>
<dbReference type="SMR" id="O39522"/>
<dbReference type="KEGG" id="vg:935292"/>
<dbReference type="OrthoDB" id="9195at10239"/>
<dbReference type="Proteomes" id="UP000007453">
    <property type="component" value="Genome"/>
</dbReference>
<dbReference type="GO" id="GO:0042025">
    <property type="term" value="C:host cell nucleus"/>
    <property type="evidence" value="ECO:0007669"/>
    <property type="project" value="UniProtKB-SubCell"/>
</dbReference>
<dbReference type="GO" id="GO:0005524">
    <property type="term" value="F:ATP binding"/>
    <property type="evidence" value="ECO:0007669"/>
    <property type="project" value="UniProtKB-KW"/>
</dbReference>
<dbReference type="GO" id="GO:0003677">
    <property type="term" value="F:DNA binding"/>
    <property type="evidence" value="ECO:0007669"/>
    <property type="project" value="UniProtKB-KW"/>
</dbReference>
<dbReference type="GO" id="GO:0016888">
    <property type="term" value="F:endodeoxyribonuclease activity, producing 5'-phosphomonoesters"/>
    <property type="evidence" value="ECO:0007669"/>
    <property type="project" value="InterPro"/>
</dbReference>
<dbReference type="GO" id="GO:0004386">
    <property type="term" value="F:helicase activity"/>
    <property type="evidence" value="ECO:0007669"/>
    <property type="project" value="UniProtKB-KW"/>
</dbReference>
<dbReference type="GO" id="GO:0046872">
    <property type="term" value="F:metal ion binding"/>
    <property type="evidence" value="ECO:0007669"/>
    <property type="project" value="UniProtKB-KW"/>
</dbReference>
<dbReference type="GO" id="GO:0016779">
    <property type="term" value="F:nucleotidyltransferase activity"/>
    <property type="evidence" value="ECO:0007669"/>
    <property type="project" value="UniProtKB-KW"/>
</dbReference>
<dbReference type="GO" id="GO:0005198">
    <property type="term" value="F:structural molecule activity"/>
    <property type="evidence" value="ECO:0007669"/>
    <property type="project" value="InterPro"/>
</dbReference>
<dbReference type="GO" id="GO:0006260">
    <property type="term" value="P:DNA replication"/>
    <property type="evidence" value="ECO:0007669"/>
    <property type="project" value="UniProtKB-KW"/>
</dbReference>
<dbReference type="Gene3D" id="3.40.1310.20">
    <property type="match status" value="1"/>
</dbReference>
<dbReference type="InterPro" id="IPR049912">
    <property type="entry name" value="CRESS_DNA_REP"/>
</dbReference>
<dbReference type="InterPro" id="IPR001301">
    <property type="entry name" value="Gemini_AL1_CLV"/>
</dbReference>
<dbReference type="InterPro" id="IPR001191">
    <property type="entry name" value="Gemini_AL1_REP"/>
</dbReference>
<dbReference type="InterPro" id="IPR022692">
    <property type="entry name" value="Gemini_AL1_REP_central"/>
</dbReference>
<dbReference type="InterPro" id="IPR027417">
    <property type="entry name" value="P-loop_NTPase"/>
</dbReference>
<dbReference type="Pfam" id="PF00799">
    <property type="entry name" value="Gemini_AL1"/>
    <property type="match status" value="1"/>
</dbReference>
<dbReference type="Pfam" id="PF08283">
    <property type="entry name" value="Gemini_AL1_M"/>
    <property type="match status" value="1"/>
</dbReference>
<dbReference type="PRINTS" id="PR00227">
    <property type="entry name" value="GEMCOATAL1"/>
</dbReference>
<dbReference type="PRINTS" id="PR00228">
    <property type="entry name" value="GEMCOATCLVL1"/>
</dbReference>
<dbReference type="SUPFAM" id="SSF55464">
    <property type="entry name" value="Origin of replication-binding domain, RBD-like"/>
    <property type="match status" value="1"/>
</dbReference>
<dbReference type="SUPFAM" id="SSF52540">
    <property type="entry name" value="P-loop containing nucleoside triphosphate hydrolases"/>
    <property type="match status" value="1"/>
</dbReference>
<dbReference type="PROSITE" id="PS52020">
    <property type="entry name" value="CRESS_DNA_REP"/>
    <property type="match status" value="1"/>
</dbReference>
<proteinExistence type="inferred from homology"/>
<protein>
    <recommendedName>
        <fullName>Replication-associated protein</fullName>
        <shortName>Rep</shortName>
        <ecNumber>2.7.7.-</ecNumber>
        <ecNumber>3.1.21.-</ecNumber>
    </recommendedName>
</protein>
<gene>
    <name type="ORF">C1/C2</name>
</gene>
<reference key="1">
    <citation type="journal article" date="1997" name="J. Gen. Virol.">
        <title>Molecular characterization of a subgroup I geminivirus from a legume.</title>
        <authorList>
            <person name="Liu L."/>
            <person name="van Tonder T."/>
            <person name="Pietersen G."/>
            <person name="Davies J.W."/>
            <person name="Stanley J."/>
        </authorList>
    </citation>
    <scope>NUCLEOTIDE SEQUENCE [GENOMIC DNA]</scope>
</reference>
<reference key="2">
    <citation type="submission" date="2003-12" db="EMBL/GenBank/DDBJ databases">
        <authorList>
            <person name="Stanley J."/>
        </authorList>
    </citation>
    <scope>SEQUENCE REVISION</scope>
</reference>
<reference key="3">
    <citation type="journal article" date="2007" name="Arch. Virol.">
        <title>The complete nucleotide sequence of a mild strain of Bean yellow dwarf virus.</title>
        <authorList>
            <person name="Halley-Stott R.P."/>
            <person name="Tanzer F."/>
            <person name="Martin D.P."/>
            <person name="Rybicki E.P."/>
        </authorList>
    </citation>
    <scope>NUCLEOTIDE SEQUENCE [GENOMIC DNA]</scope>
    <source>
        <strain>Mild</strain>
    </source>
</reference>
<reference key="4">
    <citation type="journal article" date="2003" name="J. Gen. Virol.">
        <title>Independent expression of Rep and RepA and their roles in regulating bean yellow dwarf virus replication.</title>
        <authorList>
            <person name="Hefferon K.L."/>
            <person name="Dugdale B."/>
        </authorList>
    </citation>
    <scope>FUNCTION</scope>
</reference>
<reference key="5">
    <citation type="journal article" date="2006" name="FEBS J.">
        <title>Multi-tasking of nonstructural gene products is required for bean yellow dwarf geminivirus transcriptional regulation.</title>
        <authorList>
            <person name="Hefferon K.L."/>
            <person name="Moon Y.-S."/>
            <person name="Fan Y."/>
        </authorList>
    </citation>
    <scope>FUNCTION</scope>
    <scope>SUBCELLULAR LOCATION</scope>
    <scope>NUCLEAR LOCALIZATION SIGNAL</scope>
</reference>
<evidence type="ECO:0000250" key="1"/>
<evidence type="ECO:0000255" key="2"/>
<evidence type="ECO:0000255" key="3">
    <source>
        <dbReference type="PROSITE-ProRule" id="PRU01364"/>
    </source>
</evidence>
<evidence type="ECO:0000269" key="4">
    <source>
    </source>
</evidence>
<evidence type="ECO:0000269" key="5">
    <source>
    </source>
</evidence>
<evidence type="ECO:0000305" key="6"/>
<organismHost>
    <name type="scientific">Phaseolus vulgaris</name>
    <name type="common">Kidney bean</name>
    <name type="synonym">French bean</name>
    <dbReference type="NCBI Taxonomy" id="3885"/>
</organismHost>
<name>REP_BEYDV</name>
<comment type="function">
    <text evidence="1 4 5">Essential for the replication of viral ssDNA. The closed circular ssDNA genome is first converted to a superhelical dsDNA. Rep binds a specific region at the genome origin of replication. It introduces an endonucleolytic nick within the conserved sequence 5'-TAATATTAC-3' in the intergenic region of the genome present in all geminiviruses, thereby initiating the rolling circle replication (RCR). Following cleavage, binds covalently to the 5'-phosphate of DNA as a tyrosyl ester. The cleavage gives rise to a free 3'-OH that serves as a primer for the cellular DNA polymerase. The polymerase synthesizes the (+) strand DNA by rolling circle mechanism. After one round of replication, a Rep-catalyzed nucleotidyl transfer reaction releases a circular single-stranded virus genome, thereby terminating the replication. Displays origin-specific DNA cleavage, nucleotidyl transferase, ATPase and helicase activities (By similarity). Acts a an inhibitor of C-sense gene transcription.</text>
</comment>
<comment type="cofactor">
    <cofactor evidence="3">
        <name>Mg(2+)</name>
        <dbReference type="ChEBI" id="CHEBI:18420"/>
    </cofactor>
    <cofactor evidence="3">
        <name>Mn(2+)</name>
        <dbReference type="ChEBI" id="CHEBI:29035"/>
    </cofactor>
    <text evidence="3">Divalent metal cations, possibly Mg(2+) or Mn(2+).</text>
</comment>
<comment type="subunit">
    <text evidence="1">Homooligomer. Rep binds to repeated DNA motifs (iterons). Forms the O-complex, which is a Rep-DNA complex involved in the initiation of RCR. Part of the C- and V-complexes which are RepA-Rep-DNA complexes involved in the c-sense and v-sense transcription (By similarity).</text>
</comment>
<comment type="subcellular location">
    <subcellularLocation>
        <location evidence="5">Host nucleus</location>
    </subcellularLocation>
</comment>
<comment type="alternative products">
    <event type="alternative splicing"/>
    <isoform>
        <id>O39522-1</id>
        <name>Rep</name>
        <sequence type="displayed"/>
    </isoform>
    <isoform>
        <id>O39521-1</id>
        <name>RepA</name>
        <sequence type="external"/>
    </isoform>
</comment>
<comment type="domain">
    <text>There are 3 rolling circle replication (RCR) motifs. RCR-2 is probably involved in metal coordination. RCR-3 is required for phosphodiester bond cleavage for initiation of RCR.</text>
</comment>
<comment type="similarity">
    <text evidence="6">Belongs to the geminiviridae Rep protein family.</text>
</comment>
<organism>
    <name type="scientific">Bean yellow dwarf virus</name>
    <name type="common">BeYDV</name>
    <dbReference type="NCBI Taxonomy" id="57119"/>
    <lineage>
        <taxon>Viruses</taxon>
        <taxon>Monodnaviria</taxon>
        <taxon>Shotokuvirae</taxon>
        <taxon>Cressdnaviricota</taxon>
        <taxon>Repensiviricetes</taxon>
        <taxon>Geplafuvirales</taxon>
        <taxon>Geminiviridae</taxon>
        <taxon>Mastrevirus</taxon>
    </lineage>
</organism>
<accession>O39522</accession>
<accession>A4K7Q3</accession>
<feature type="chain" id="PRO_0000318771" description="Replication-associated protein">
    <location>
        <begin position="1"/>
        <end position="334"/>
    </location>
</feature>
<feature type="domain" description="CRESS-DNA virus Rep endonuclease" evidence="3">
    <location>
        <begin position="9"/>
        <end position="111"/>
    </location>
</feature>
<feature type="region of interest" description="Oligomerization" evidence="1">
    <location>
        <begin position="160"/>
        <end position="172"/>
    </location>
</feature>
<feature type="region of interest" description="Transactivation" evidence="1">
    <location>
        <begin position="236"/>
        <end position="254"/>
    </location>
</feature>
<feature type="short sequence motif" description="RCR-1" evidence="3">
    <location>
        <begin position="16"/>
        <end position="19"/>
    </location>
</feature>
<feature type="short sequence motif" description="RCR-2" evidence="3">
    <location>
        <begin position="58"/>
        <end position="60"/>
    </location>
</feature>
<feature type="short sequence motif" description="RCR-3" evidence="3">
    <location>
        <begin position="98"/>
        <end position="101"/>
    </location>
</feature>
<feature type="short sequence motif" description="Nuclear localization signal" evidence="2">
    <location>
        <begin position="276"/>
        <end position="286"/>
    </location>
</feature>
<feature type="active site" description="For DNA cleavage activity" evidence="3">
    <location>
        <position position="98"/>
    </location>
</feature>
<feature type="binding site" evidence="3">
    <location>
        <position position="50"/>
    </location>
    <ligand>
        <name>a divalent metal cation</name>
        <dbReference type="ChEBI" id="CHEBI:60240"/>
    </ligand>
</feature>
<feature type="binding site" evidence="3">
    <location>
        <position position="58"/>
    </location>
    <ligand>
        <name>a divalent metal cation</name>
        <dbReference type="ChEBI" id="CHEBI:60240"/>
    </ligand>
</feature>
<feature type="binding site" evidence="3">
    <location>
        <position position="60"/>
    </location>
    <ligand>
        <name>a divalent metal cation</name>
        <dbReference type="ChEBI" id="CHEBI:60240"/>
    </ligand>
</feature>
<feature type="binding site" evidence="3">
    <location>
        <position position="102"/>
    </location>
    <ligand>
        <name>a divalent metal cation</name>
        <dbReference type="ChEBI" id="CHEBI:60240"/>
    </ligand>
</feature>
<feature type="binding site" evidence="2">
    <location>
        <begin position="213"/>
        <end position="220"/>
    </location>
    <ligand>
        <name>ATP</name>
        <dbReference type="ChEBI" id="CHEBI:30616"/>
    </ligand>
</feature>
<feature type="sequence variant" description="In strain: Mild.">
    <original>I</original>
    <variation>L</variation>
    <location>
        <position position="63"/>
    </location>
</feature>
<feature type="sequence variant" description="In strain: Mild.">
    <original>Q</original>
    <variation>P</variation>
    <location>
        <position position="171"/>
    </location>
</feature>
<feature type="sequence variant" description="In strain: Mild.">
    <original>N</original>
    <variation>S</variation>
    <location>
        <position position="189"/>
    </location>
</feature>
<feature type="sequence variant" description="In strain: Mild.">
    <original>E</original>
    <variation>N</variation>
    <location>
        <position position="199"/>
    </location>
</feature>
<feature type="sequence variant" description="In strain: Mild.">
    <original>TGV</original>
    <variation>NGI</variation>
    <location>
        <begin position="202"/>
        <end position="204"/>
    </location>
</feature>
<feature type="sequence variant" description="In strain: Mild.">
    <original>E</original>
    <variation>K</variation>
    <location>
        <position position="312"/>
    </location>
</feature>
<keyword id="KW-0025">Alternative splicing</keyword>
<keyword id="KW-0067">ATP-binding</keyword>
<keyword id="KW-0190">Covalent protein-DNA linkage</keyword>
<keyword id="KW-0235">DNA replication</keyword>
<keyword id="KW-0238">DNA-binding</keyword>
<keyword id="KW-0255">Endonuclease</keyword>
<keyword id="KW-0347">Helicase</keyword>
<keyword id="KW-1048">Host nucleus</keyword>
<keyword id="KW-0378">Hydrolase</keyword>
<keyword id="KW-0479">Metal-binding</keyword>
<keyword id="KW-0511">Multifunctional enzyme</keyword>
<keyword id="KW-0540">Nuclease</keyword>
<keyword id="KW-0547">Nucleotide-binding</keyword>
<keyword id="KW-0548">Nucleotidyltransferase</keyword>
<keyword id="KW-1185">Reference proteome</keyword>
<keyword id="KW-0678">Repressor</keyword>
<keyword id="KW-0808">Transferase</keyword>